<dbReference type="EC" id="2.3.2.31" evidence="8"/>
<dbReference type="EMBL" id="D79983">
    <property type="protein sequence ID" value="BAA11478.2"/>
    <property type="status" value="ALT_INIT"/>
    <property type="molecule type" value="mRNA"/>
</dbReference>
<dbReference type="EMBL" id="AC068481">
    <property type="protein sequence ID" value="AAX82010.1"/>
    <property type="molecule type" value="Genomic_DNA"/>
</dbReference>
<dbReference type="EMBL" id="CH471053">
    <property type="protein sequence ID" value="EAX01030.1"/>
    <property type="molecule type" value="Genomic_DNA"/>
</dbReference>
<dbReference type="EMBL" id="CH471053">
    <property type="protein sequence ID" value="EAX01031.1"/>
    <property type="molecule type" value="Genomic_DNA"/>
</dbReference>
<dbReference type="EMBL" id="BC050373">
    <property type="protein sequence ID" value="AAH50373.1"/>
    <property type="molecule type" value="mRNA"/>
</dbReference>
<dbReference type="CCDS" id="CCDS1657.1"/>
<dbReference type="RefSeq" id="NP_001336111.1">
    <property type="nucleotide sequence ID" value="NM_001349182.2"/>
</dbReference>
<dbReference type="RefSeq" id="NP_001336112.1">
    <property type="nucleotide sequence ID" value="NM_001349183.2"/>
</dbReference>
<dbReference type="RefSeq" id="NP_001336113.1">
    <property type="nucleotide sequence ID" value="NM_001349184.2"/>
</dbReference>
<dbReference type="RefSeq" id="NP_055561.2">
    <property type="nucleotide sequence ID" value="NM_014746.4"/>
</dbReference>
<dbReference type="RefSeq" id="XP_005246257.1">
    <property type="nucleotide sequence ID" value="XM_005246200.3"/>
</dbReference>
<dbReference type="RefSeq" id="XP_005246259.1">
    <property type="nucleotide sequence ID" value="XM_005246202.4"/>
</dbReference>
<dbReference type="RefSeq" id="XP_016860885.1">
    <property type="nucleotide sequence ID" value="XM_017005396.1"/>
</dbReference>
<dbReference type="RefSeq" id="XP_016860886.1">
    <property type="nucleotide sequence ID" value="XM_017005397.1"/>
</dbReference>
<dbReference type="PDB" id="1WIM">
    <property type="method" value="NMR"/>
    <property type="chains" value="A=20-100"/>
</dbReference>
<dbReference type="PDB" id="6L99">
    <property type="method" value="NMR"/>
    <property type="chains" value="A=13-87"/>
</dbReference>
<dbReference type="PDBsum" id="1WIM"/>
<dbReference type="PDBsum" id="6L99"/>
<dbReference type="BMRB" id="P50876"/>
<dbReference type="SMR" id="P50876"/>
<dbReference type="BioGRID" id="115125">
    <property type="interactions" value="96"/>
</dbReference>
<dbReference type="FunCoup" id="P50876">
    <property type="interactions" value="477"/>
</dbReference>
<dbReference type="IntAct" id="P50876">
    <property type="interactions" value="23"/>
</dbReference>
<dbReference type="MINT" id="P50876"/>
<dbReference type="STRING" id="9606.ENSP00000321330"/>
<dbReference type="GlyGen" id="P50876">
    <property type="glycosylation" value="1 site, 1 O-linked glycan (1 site)"/>
</dbReference>
<dbReference type="iPTMnet" id="P50876"/>
<dbReference type="PhosphoSitePlus" id="P50876"/>
<dbReference type="BioMuta" id="RNF144A"/>
<dbReference type="DMDM" id="160358924"/>
<dbReference type="jPOST" id="P50876"/>
<dbReference type="MassIVE" id="P50876"/>
<dbReference type="PaxDb" id="9606-ENSP00000321330"/>
<dbReference type="PeptideAtlas" id="P50876"/>
<dbReference type="ProteomicsDB" id="56267"/>
<dbReference type="Antibodypedia" id="26428">
    <property type="antibodies" value="180 antibodies from 29 providers"/>
</dbReference>
<dbReference type="DNASU" id="9781"/>
<dbReference type="Ensembl" id="ENST00000320892.11">
    <property type="protein sequence ID" value="ENSP00000321330.6"/>
    <property type="gene ID" value="ENSG00000151692.15"/>
</dbReference>
<dbReference type="GeneID" id="9781"/>
<dbReference type="KEGG" id="hsa:9781"/>
<dbReference type="MANE-Select" id="ENST00000320892.11">
    <property type="protein sequence ID" value="ENSP00000321330.6"/>
    <property type="RefSeq nucleotide sequence ID" value="NM_014746.6"/>
    <property type="RefSeq protein sequence ID" value="NP_055561.2"/>
</dbReference>
<dbReference type="UCSC" id="uc002qys.4">
    <property type="organism name" value="human"/>
</dbReference>
<dbReference type="AGR" id="HGNC:20457"/>
<dbReference type="CTD" id="9781"/>
<dbReference type="DisGeNET" id="9781"/>
<dbReference type="GeneCards" id="RNF144A"/>
<dbReference type="HGNC" id="HGNC:20457">
    <property type="gene designation" value="RNF144A"/>
</dbReference>
<dbReference type="HPA" id="ENSG00000151692">
    <property type="expression patterns" value="Tissue enhanced (brain)"/>
</dbReference>
<dbReference type="MIM" id="619454">
    <property type="type" value="gene"/>
</dbReference>
<dbReference type="neXtProt" id="NX_P50876"/>
<dbReference type="OpenTargets" id="ENSG00000151692"/>
<dbReference type="PharmGKB" id="PA162401542"/>
<dbReference type="VEuPathDB" id="HostDB:ENSG00000151692"/>
<dbReference type="eggNOG" id="KOG1815">
    <property type="taxonomic scope" value="Eukaryota"/>
</dbReference>
<dbReference type="GeneTree" id="ENSGT00940000157701"/>
<dbReference type="HOGENOM" id="CLU_053598_1_0_1"/>
<dbReference type="InParanoid" id="P50876"/>
<dbReference type="OMA" id="CMVAAEM"/>
<dbReference type="OrthoDB" id="10009520at2759"/>
<dbReference type="PAN-GO" id="P50876">
    <property type="GO annotations" value="8 GO annotations based on evolutionary models"/>
</dbReference>
<dbReference type="PhylomeDB" id="P50876"/>
<dbReference type="TreeFam" id="TF324777"/>
<dbReference type="BRENDA" id="2.3.2.31">
    <property type="organism ID" value="2681"/>
</dbReference>
<dbReference type="PathwayCommons" id="P50876"/>
<dbReference type="Reactome" id="R-HSA-8866654">
    <property type="pathway name" value="E3 ubiquitin ligases ubiquitinate target proteins"/>
</dbReference>
<dbReference type="SignaLink" id="P50876"/>
<dbReference type="SIGNOR" id="P50876"/>
<dbReference type="UniPathway" id="UPA00143"/>
<dbReference type="BioGRID-ORCS" id="9781">
    <property type="hits" value="13 hits in 1201 CRISPR screens"/>
</dbReference>
<dbReference type="ChiTaRS" id="RNF144A">
    <property type="organism name" value="human"/>
</dbReference>
<dbReference type="EvolutionaryTrace" id="P50876"/>
<dbReference type="GenomeRNAi" id="9781"/>
<dbReference type="Pharos" id="P50876">
    <property type="development level" value="Tbio"/>
</dbReference>
<dbReference type="PRO" id="PR:P50876"/>
<dbReference type="Proteomes" id="UP000005640">
    <property type="component" value="Chromosome 2"/>
</dbReference>
<dbReference type="RNAct" id="P50876">
    <property type="molecule type" value="protein"/>
</dbReference>
<dbReference type="Bgee" id="ENSG00000151692">
    <property type="expression patterns" value="Expressed in cerebellar hemisphere and 181 other cell types or tissues"/>
</dbReference>
<dbReference type="ExpressionAtlas" id="P50876">
    <property type="expression patterns" value="baseline and differential"/>
</dbReference>
<dbReference type="GO" id="GO:0005737">
    <property type="term" value="C:cytoplasm"/>
    <property type="evidence" value="ECO:0000318"/>
    <property type="project" value="GO_Central"/>
</dbReference>
<dbReference type="GO" id="GO:0005789">
    <property type="term" value="C:endoplasmic reticulum membrane"/>
    <property type="evidence" value="ECO:0000314"/>
    <property type="project" value="UniProt"/>
</dbReference>
<dbReference type="GO" id="GO:0010008">
    <property type="term" value="C:endosome membrane"/>
    <property type="evidence" value="ECO:0000304"/>
    <property type="project" value="Reactome"/>
</dbReference>
<dbReference type="GO" id="GO:0005794">
    <property type="term" value="C:Golgi apparatus"/>
    <property type="evidence" value="ECO:0000314"/>
    <property type="project" value="UniProtKB"/>
</dbReference>
<dbReference type="GO" id="GO:0043231">
    <property type="term" value="C:intracellular membrane-bounded organelle"/>
    <property type="evidence" value="ECO:0000314"/>
    <property type="project" value="HPA"/>
</dbReference>
<dbReference type="GO" id="GO:0005886">
    <property type="term" value="C:plasma membrane"/>
    <property type="evidence" value="ECO:0007669"/>
    <property type="project" value="UniProtKB-SubCell"/>
</dbReference>
<dbReference type="GO" id="GO:0000151">
    <property type="term" value="C:ubiquitin ligase complex"/>
    <property type="evidence" value="ECO:0000318"/>
    <property type="project" value="GO_Central"/>
</dbReference>
<dbReference type="GO" id="GO:0031624">
    <property type="term" value="F:ubiquitin conjugating enzyme binding"/>
    <property type="evidence" value="ECO:0000318"/>
    <property type="project" value="GO_Central"/>
</dbReference>
<dbReference type="GO" id="GO:0061630">
    <property type="term" value="F:ubiquitin protein ligase activity"/>
    <property type="evidence" value="ECO:0000314"/>
    <property type="project" value="UniProt"/>
</dbReference>
<dbReference type="GO" id="GO:0008270">
    <property type="term" value="F:zinc ion binding"/>
    <property type="evidence" value="ECO:0007669"/>
    <property type="project" value="UniProtKB-KW"/>
</dbReference>
<dbReference type="GO" id="GO:0002221">
    <property type="term" value="P:pattern recognition receptor signaling pathway"/>
    <property type="evidence" value="ECO:0000314"/>
    <property type="project" value="UniProt"/>
</dbReference>
<dbReference type="GO" id="GO:0085020">
    <property type="term" value="P:protein K6-linked ubiquitination"/>
    <property type="evidence" value="ECO:0000314"/>
    <property type="project" value="UniProt"/>
</dbReference>
<dbReference type="GO" id="GO:0016567">
    <property type="term" value="P:protein ubiquitination"/>
    <property type="evidence" value="ECO:0000304"/>
    <property type="project" value="Reactome"/>
</dbReference>
<dbReference type="GO" id="GO:0006511">
    <property type="term" value="P:ubiquitin-dependent protein catabolic process"/>
    <property type="evidence" value="ECO:0000318"/>
    <property type="project" value="GO_Central"/>
</dbReference>
<dbReference type="CDD" id="cd20366">
    <property type="entry name" value="BRcat_RBR_RNF144A"/>
    <property type="match status" value="1"/>
</dbReference>
<dbReference type="CDD" id="cd16777">
    <property type="entry name" value="mRING-HC-C4C4_RBR_RNF144A"/>
    <property type="match status" value="1"/>
</dbReference>
<dbReference type="CDD" id="cd20352">
    <property type="entry name" value="Rcat_RBR_RNF144"/>
    <property type="match status" value="1"/>
</dbReference>
<dbReference type="FunFam" id="1.20.120.1750:FF:000006">
    <property type="entry name" value="RBR-type E3 ubiquitin transferase"/>
    <property type="match status" value="1"/>
</dbReference>
<dbReference type="FunFam" id="3.30.40.10:FF:000051">
    <property type="entry name" value="RBR-type E3 ubiquitin transferase"/>
    <property type="match status" value="1"/>
</dbReference>
<dbReference type="Gene3D" id="1.20.120.1750">
    <property type="match status" value="1"/>
</dbReference>
<dbReference type="Gene3D" id="3.30.40.10">
    <property type="entry name" value="Zinc/RING finger domain, C3HC4 (zinc finger)"/>
    <property type="match status" value="1"/>
</dbReference>
<dbReference type="InterPro" id="IPR031127">
    <property type="entry name" value="E3_UB_ligase_RBR"/>
</dbReference>
<dbReference type="InterPro" id="IPR002867">
    <property type="entry name" value="IBR_dom"/>
</dbReference>
<dbReference type="InterPro" id="IPR044066">
    <property type="entry name" value="TRIAD_supradom"/>
</dbReference>
<dbReference type="InterPro" id="IPR001841">
    <property type="entry name" value="Znf_RING"/>
</dbReference>
<dbReference type="InterPro" id="IPR013083">
    <property type="entry name" value="Znf_RING/FYVE/PHD"/>
</dbReference>
<dbReference type="InterPro" id="IPR017907">
    <property type="entry name" value="Znf_RING_CS"/>
</dbReference>
<dbReference type="PANTHER" id="PTHR11685">
    <property type="entry name" value="RBR FAMILY RING FINGER AND IBR DOMAIN-CONTAINING"/>
    <property type="match status" value="1"/>
</dbReference>
<dbReference type="Pfam" id="PF01485">
    <property type="entry name" value="IBR"/>
    <property type="match status" value="1"/>
</dbReference>
<dbReference type="Pfam" id="PF22191">
    <property type="entry name" value="IBR_1"/>
    <property type="match status" value="1"/>
</dbReference>
<dbReference type="SMART" id="SM00647">
    <property type="entry name" value="IBR"/>
    <property type="match status" value="2"/>
</dbReference>
<dbReference type="SUPFAM" id="SSF57850">
    <property type="entry name" value="RING/U-box"/>
    <property type="match status" value="3"/>
</dbReference>
<dbReference type="PROSITE" id="PS51873">
    <property type="entry name" value="TRIAD"/>
    <property type="match status" value="1"/>
</dbReference>
<dbReference type="PROSITE" id="PS00518">
    <property type="entry name" value="ZF_RING_1"/>
    <property type="match status" value="1"/>
</dbReference>
<dbReference type="PROSITE" id="PS50089">
    <property type="entry name" value="ZF_RING_2"/>
    <property type="match status" value="1"/>
</dbReference>
<comment type="function">
    <text evidence="1 7 8 9 10 11">E3 ubiquitin-protein ligase which accepts ubiquitin from E2 ubiquitin-conjugating enzymes UBE2L3 and UBE2L6 in the form of a thioester and then directly transfers the ubiquitin to targeted substrates (PubMed:26216882). Mediates the ubiquitination and degradation of the DNA damage kinase PRKDC during DNA damage (PubMed:24979766). Positively regulates DNA virus or exogenous cytosolic DNA-triggered innate immune response by mediating STING1 ubiquitination and increasing its 'Lys-6'-linked ubiquitination and translocation from the endoplasmic reticulum to the Golgi leading to downstream signaling pathways (PubMed:37955227). Plays a positive role in EGF-dependent cell proliferation by prolonging EGF/EGFR signaling during EGF stimulation through EGFR ubiquitination (PubMed:30171075). Increases ERK activity independently of EGFR signaling by promoting polyubiquitination and subsequent degradation of VRK3 in the cytosol (PubMed:33067254).</text>
</comment>
<comment type="catalytic activity">
    <reaction evidence="2">
        <text>[E2 ubiquitin-conjugating enzyme]-S-ubiquitinyl-L-cysteine + [acceptor protein]-L-lysine = [E2 ubiquitin-conjugating enzyme]-L-cysteine + [acceptor protein]-N(6)-ubiquitinyl-L-lysine.</text>
        <dbReference type="EC" id="2.3.2.31"/>
    </reaction>
</comment>
<comment type="pathway">
    <text>Protein modification; protein ubiquitination.</text>
</comment>
<comment type="subunit">
    <text evidence="5 8">Self-associates (PubMed:26216882). Interacts with UBE2L3 (PubMed:10431818).</text>
</comment>
<comment type="interaction">
    <interactant intactId="EBI-2340657">
        <id>P50876</id>
    </interactant>
    <interactant intactId="EBI-702400">
        <id>Q07065</id>
        <label>CKAP4</label>
    </interactant>
    <organismsDiffer>false</organismsDiffer>
    <experiments>2</experiments>
</comment>
<comment type="interaction">
    <interactant intactId="EBI-2340657">
        <id>P50876</id>
    </interactant>
    <interactant intactId="EBI-12831978">
        <id>Q6ZPD8</id>
        <label>DGAT2L6</label>
    </interactant>
    <organismsDiffer>false</organismsDiffer>
    <experiments>3</experiments>
</comment>
<comment type="interaction">
    <interactant intactId="EBI-2340657">
        <id>P50876</id>
    </interactant>
    <interactant intactId="EBI-3920969">
        <id>Q6N075</id>
        <label>MFSD5</label>
    </interactant>
    <organismsDiffer>false</organismsDiffer>
    <experiments>3</experiments>
</comment>
<comment type="interaction">
    <interactant intactId="EBI-2340657">
        <id>P50876</id>
    </interactant>
    <interactant intactId="EBI-17265310">
        <id>Q6TCH4</id>
        <label>PAQR6</label>
    </interactant>
    <organismsDiffer>false</organismsDiffer>
    <experiments>3</experiments>
</comment>
<comment type="interaction">
    <interactant intactId="EBI-2340657">
        <id>P50876</id>
    </interactant>
    <interactant intactId="EBI-6269616">
        <id>Q96AA3</id>
        <label>RFT1</label>
    </interactant>
    <organismsDiffer>false</organismsDiffer>
    <experiments>3</experiments>
</comment>
<comment type="interaction">
    <interactant intactId="EBI-2340657">
        <id>P50876</id>
    </interactant>
    <interactant intactId="EBI-8652744">
        <id>Q96IW7</id>
        <label>SEC22A</label>
    </interactant>
    <organismsDiffer>false</organismsDiffer>
    <experiments>3</experiments>
</comment>
<comment type="interaction">
    <interactant intactId="EBI-2340657">
        <id>P50876</id>
    </interactant>
    <interactant intactId="EBI-347996">
        <id>O43765</id>
        <label>SGTA</label>
    </interactant>
    <organismsDiffer>false</organismsDiffer>
    <experiments>3</experiments>
</comment>
<comment type="interaction">
    <interactant intactId="EBI-2340657">
        <id>P50876</id>
    </interactant>
    <interactant intactId="EBI-744081">
        <id>Q96EQ0</id>
        <label>SGTB</label>
    </interactant>
    <organismsDiffer>false</organismsDiffer>
    <experiments>3</experiments>
</comment>
<comment type="interaction">
    <interactant intactId="EBI-2340657">
        <id>P50876</id>
    </interactant>
    <interactant intactId="EBI-4289564">
        <id>P30825</id>
        <label>SLC7A1</label>
    </interactant>
    <organismsDiffer>false</organismsDiffer>
    <experiments>3</experiments>
</comment>
<comment type="interaction">
    <interactant intactId="EBI-2340657">
        <id>P50876</id>
    </interactant>
    <interactant intactId="EBI-711173">
        <id>P68036</id>
        <label>UBE2L3</label>
    </interactant>
    <organismsDiffer>false</organismsDiffer>
    <experiments>4</experiments>
</comment>
<comment type="interaction">
    <interactant intactId="EBI-2340657">
        <id>P50876</id>
    </interactant>
    <interactant intactId="EBI-2799703">
        <id>O95070</id>
        <label>YIF1A</label>
    </interactant>
    <organismsDiffer>false</organismsDiffer>
    <experiments>3</experiments>
</comment>
<comment type="subcellular location">
    <subcellularLocation>
        <location evidence="7 9">Cell membrane</location>
        <topology evidence="14">Single-pass membrane protein</topology>
    </subcellularLocation>
    <subcellularLocation>
        <location evidence="7 11">Cytoplasmic vesicle membrane</location>
    </subcellularLocation>
    <subcellularLocation>
        <location evidence="9">Endosome membrane</location>
    </subcellularLocation>
    <subcellularLocation>
        <location evidence="11">Endoplasmic reticulum membrane</location>
    </subcellularLocation>
</comment>
<comment type="domain">
    <text evidence="2">Members of the RBR family are atypical E3 ligases. They interact with the E2 conjugating enzyme UBE2L3 and function like HECT-type E3 enzymes: they bind E2s via the first RING domain, but require an obligate trans-thiolation step during the ubiquitin transfer, requiring a conserved cysteine residue in the second RING domain.</text>
</comment>
<comment type="PTM">
    <text evidence="7 8">Auto-ubiquitinated.</text>
</comment>
<comment type="similarity">
    <text evidence="14">Belongs to the RBR family. RNF144 subfamily.</text>
</comment>
<comment type="caution">
    <text evidence="14">Lacks the His residue in the RING-type domain 2 that is one of the conserved features of the family.</text>
</comment>
<comment type="sequence caution" evidence="14">
    <conflict type="erroneous initiation">
        <sequence resource="EMBL-CDS" id="BAA11478"/>
    </conflict>
</comment>
<keyword id="KW-0002">3D-structure</keyword>
<keyword id="KW-1003">Cell membrane</keyword>
<keyword id="KW-0968">Cytoplasmic vesicle</keyword>
<keyword id="KW-0256">Endoplasmic reticulum</keyword>
<keyword id="KW-0967">Endosome</keyword>
<keyword id="KW-0472">Membrane</keyword>
<keyword id="KW-0479">Metal-binding</keyword>
<keyword id="KW-1267">Proteomics identification</keyword>
<keyword id="KW-1185">Reference proteome</keyword>
<keyword id="KW-0677">Repeat</keyword>
<keyword id="KW-0808">Transferase</keyword>
<keyword id="KW-0812">Transmembrane</keyword>
<keyword id="KW-1133">Transmembrane helix</keyword>
<keyword id="KW-0832">Ubl conjugation</keyword>
<keyword id="KW-0833">Ubl conjugation pathway</keyword>
<keyword id="KW-0862">Zinc</keyword>
<keyword id="KW-0863">Zinc-finger</keyword>
<accession>P50876</accession>
<accession>D6W4Y6</accession>
<accession>Q585H5</accession>
<name>R144A_HUMAN</name>
<proteinExistence type="evidence at protein level"/>
<gene>
    <name type="primary">RNF144A</name>
    <name type="synonym">KIAA0161</name>
    <name type="synonym">RNF144</name>
    <name type="synonym">UBCE7IP4</name>
</gene>
<organism>
    <name type="scientific">Homo sapiens</name>
    <name type="common">Human</name>
    <dbReference type="NCBI Taxonomy" id="9606"/>
    <lineage>
        <taxon>Eukaryota</taxon>
        <taxon>Metazoa</taxon>
        <taxon>Chordata</taxon>
        <taxon>Craniata</taxon>
        <taxon>Vertebrata</taxon>
        <taxon>Euteleostomi</taxon>
        <taxon>Mammalia</taxon>
        <taxon>Eutheria</taxon>
        <taxon>Euarchontoglires</taxon>
        <taxon>Primates</taxon>
        <taxon>Haplorrhini</taxon>
        <taxon>Catarrhini</taxon>
        <taxon>Hominidae</taxon>
        <taxon>Homo</taxon>
    </lineage>
</organism>
<reference key="1">
    <citation type="journal article" date="1996" name="DNA Res.">
        <title>Prediction of the coding sequences of unidentified human genes. V. The coding sequences of 40 new genes (KIAA0161-KIAA0200) deduced by analysis of cDNA clones from human cell line KG-1.</title>
        <authorList>
            <person name="Nagase T."/>
            <person name="Seki N."/>
            <person name="Ishikawa K."/>
            <person name="Tanaka A."/>
            <person name="Nomura N."/>
        </authorList>
    </citation>
    <scope>NUCLEOTIDE SEQUENCE [LARGE SCALE MRNA]</scope>
    <scope>VARIANT ALA-4</scope>
    <source>
        <tissue>Bone marrow</tissue>
    </source>
</reference>
<reference key="2">
    <citation type="journal article" date="2005" name="Nature">
        <title>Generation and annotation of the DNA sequences of human chromosomes 2 and 4.</title>
        <authorList>
            <person name="Hillier L.W."/>
            <person name="Graves T.A."/>
            <person name="Fulton R.S."/>
            <person name="Fulton L.A."/>
            <person name="Pepin K.H."/>
            <person name="Minx P."/>
            <person name="Wagner-McPherson C."/>
            <person name="Layman D."/>
            <person name="Wylie K."/>
            <person name="Sekhon M."/>
            <person name="Becker M.C."/>
            <person name="Fewell G.A."/>
            <person name="Delehaunty K.D."/>
            <person name="Miner T.L."/>
            <person name="Nash W.E."/>
            <person name="Kremitzki C."/>
            <person name="Oddy L."/>
            <person name="Du H."/>
            <person name="Sun H."/>
            <person name="Bradshaw-Cordum H."/>
            <person name="Ali J."/>
            <person name="Carter J."/>
            <person name="Cordes M."/>
            <person name="Harris A."/>
            <person name="Isak A."/>
            <person name="van Brunt A."/>
            <person name="Nguyen C."/>
            <person name="Du F."/>
            <person name="Courtney L."/>
            <person name="Kalicki J."/>
            <person name="Ozersky P."/>
            <person name="Abbott S."/>
            <person name="Armstrong J."/>
            <person name="Belter E.A."/>
            <person name="Caruso L."/>
            <person name="Cedroni M."/>
            <person name="Cotton M."/>
            <person name="Davidson T."/>
            <person name="Desai A."/>
            <person name="Elliott G."/>
            <person name="Erb T."/>
            <person name="Fronick C."/>
            <person name="Gaige T."/>
            <person name="Haakenson W."/>
            <person name="Haglund K."/>
            <person name="Holmes A."/>
            <person name="Harkins R."/>
            <person name="Kim K."/>
            <person name="Kruchowski S.S."/>
            <person name="Strong C.M."/>
            <person name="Grewal N."/>
            <person name="Goyea E."/>
            <person name="Hou S."/>
            <person name="Levy A."/>
            <person name="Martinka S."/>
            <person name="Mead K."/>
            <person name="McLellan M.D."/>
            <person name="Meyer R."/>
            <person name="Randall-Maher J."/>
            <person name="Tomlinson C."/>
            <person name="Dauphin-Kohlberg S."/>
            <person name="Kozlowicz-Reilly A."/>
            <person name="Shah N."/>
            <person name="Swearengen-Shahid S."/>
            <person name="Snider J."/>
            <person name="Strong J.T."/>
            <person name="Thompson J."/>
            <person name="Yoakum M."/>
            <person name="Leonard S."/>
            <person name="Pearman C."/>
            <person name="Trani L."/>
            <person name="Radionenko M."/>
            <person name="Waligorski J.E."/>
            <person name="Wang C."/>
            <person name="Rock S.M."/>
            <person name="Tin-Wollam A.-M."/>
            <person name="Maupin R."/>
            <person name="Latreille P."/>
            <person name="Wendl M.C."/>
            <person name="Yang S.-P."/>
            <person name="Pohl C."/>
            <person name="Wallis J.W."/>
            <person name="Spieth J."/>
            <person name="Bieri T.A."/>
            <person name="Berkowicz N."/>
            <person name="Nelson J.O."/>
            <person name="Osborne J."/>
            <person name="Ding L."/>
            <person name="Meyer R."/>
            <person name="Sabo A."/>
            <person name="Shotland Y."/>
            <person name="Sinha P."/>
            <person name="Wohldmann P.E."/>
            <person name="Cook L.L."/>
            <person name="Hickenbotham M.T."/>
            <person name="Eldred J."/>
            <person name="Williams D."/>
            <person name="Jones T.A."/>
            <person name="She X."/>
            <person name="Ciccarelli F.D."/>
            <person name="Izaurralde E."/>
            <person name="Taylor J."/>
            <person name="Schmutz J."/>
            <person name="Myers R.M."/>
            <person name="Cox D.R."/>
            <person name="Huang X."/>
            <person name="McPherson J.D."/>
            <person name="Mardis E.R."/>
            <person name="Clifton S.W."/>
            <person name="Warren W.C."/>
            <person name="Chinwalla A.T."/>
            <person name="Eddy S.R."/>
            <person name="Marra M.A."/>
            <person name="Ovcharenko I."/>
            <person name="Furey T.S."/>
            <person name="Miller W."/>
            <person name="Eichler E.E."/>
            <person name="Bork P."/>
            <person name="Suyama M."/>
            <person name="Torrents D."/>
            <person name="Waterston R.H."/>
            <person name="Wilson R.K."/>
        </authorList>
    </citation>
    <scope>NUCLEOTIDE SEQUENCE [LARGE SCALE GENOMIC DNA]</scope>
</reference>
<reference key="3">
    <citation type="submission" date="2005-09" db="EMBL/GenBank/DDBJ databases">
        <authorList>
            <person name="Mural R.J."/>
            <person name="Istrail S."/>
            <person name="Sutton G.G."/>
            <person name="Florea L."/>
            <person name="Halpern A.L."/>
            <person name="Mobarry C.M."/>
            <person name="Lippert R."/>
            <person name="Walenz B."/>
            <person name="Shatkay H."/>
            <person name="Dew I."/>
            <person name="Miller J.R."/>
            <person name="Flanigan M.J."/>
            <person name="Edwards N.J."/>
            <person name="Bolanos R."/>
            <person name="Fasulo D."/>
            <person name="Halldorsson B.V."/>
            <person name="Hannenhalli S."/>
            <person name="Turner R."/>
            <person name="Yooseph S."/>
            <person name="Lu F."/>
            <person name="Nusskern D.R."/>
            <person name="Shue B.C."/>
            <person name="Zheng X.H."/>
            <person name="Zhong F."/>
            <person name="Delcher A.L."/>
            <person name="Huson D.H."/>
            <person name="Kravitz S.A."/>
            <person name="Mouchard L."/>
            <person name="Reinert K."/>
            <person name="Remington K.A."/>
            <person name="Clark A.G."/>
            <person name="Waterman M.S."/>
            <person name="Eichler E.E."/>
            <person name="Adams M.D."/>
            <person name="Hunkapiller M.W."/>
            <person name="Myers E.W."/>
            <person name="Venter J.C."/>
        </authorList>
    </citation>
    <scope>NUCLEOTIDE SEQUENCE [LARGE SCALE GENOMIC DNA]</scope>
    <scope>VARIANT ALA-4</scope>
</reference>
<reference key="4">
    <citation type="journal article" date="2004" name="Genome Res.">
        <title>The status, quality, and expansion of the NIH full-length cDNA project: the Mammalian Gene Collection (MGC).</title>
        <authorList>
            <consortium name="The MGC Project Team"/>
        </authorList>
    </citation>
    <scope>NUCLEOTIDE SEQUENCE [LARGE SCALE MRNA]</scope>
    <scope>VARIANT ALA-4</scope>
    <source>
        <tissue>Ovary</tissue>
    </source>
</reference>
<reference key="5">
    <citation type="journal article" date="1999" name="FEBS Lett.">
        <title>A family of structurally related RING finger proteins interacts specifically with the ubiquitin-conjugating enzyme UbcM4.</title>
        <authorList>
            <person name="Martinez-Noel G."/>
            <person name="Niedenthal R."/>
            <person name="Tamura T."/>
            <person name="Harbers K."/>
        </authorList>
    </citation>
    <scope>INTERACTION WITH UBE2L3</scope>
</reference>
<reference key="6">
    <citation type="journal article" date="2014" name="Proc. Natl. Acad. Sci. U.S.A.">
        <title>RNF144A, an E3 ubiquitin ligase for DNA-PKcs, promotes apoptosis during DNA damage.</title>
        <authorList>
            <person name="Ho S.R."/>
            <person name="Mahanic C.S."/>
            <person name="Lee Y.J."/>
            <person name="Lin W.C."/>
        </authorList>
    </citation>
    <scope>FUNCTION</scope>
    <scope>AUTOUBIQUITINATION</scope>
    <scope>SUBCELLULAR LOCATION</scope>
</reference>
<reference key="7">
    <citation type="journal article" date="2015" name="J. Biol. Chem.">
        <title>Regulation of RNF144A E3 Ubiquitin Ligase Activity by Self-association through Its Transmembrane Domain.</title>
        <authorList>
            <person name="Ho S.R."/>
            <person name="Lee Y.J."/>
            <person name="Lin W.C."/>
        </authorList>
    </citation>
    <scope>FUNCTION</scope>
    <scope>MUTAGENESIS OF CYS-20; CYS-23; GLY-252 AND GLY-256</scope>
    <scope>SUBUNIT</scope>
    <scope>SUBCELLULAR LOCATION</scope>
    <scope>CATALYTIC ACTIVITY</scope>
    <scope>UBIQUITINATION</scope>
</reference>
<reference key="8">
    <citation type="journal article" date="2018" name="J. Biol. Chem.">
        <title>RNF144A sustains EGFR signaling to promote EGF-dependent cell proliferation.</title>
        <authorList>
            <person name="Ho S.R."/>
            <person name="Lin W.C."/>
        </authorList>
    </citation>
    <scope>FUNCTION</scope>
    <scope>SUBCELLULAR LOCATION</scope>
    <scope>MUTAGENESIS OF CYS-20 AND CYS-23</scope>
</reference>
<reference key="9">
    <citation type="journal article" date="2020" name="J. Cell Sci.">
        <title>RNF144a induces ERK-dependent cell death under oxidative stress via downregulation of vaccinia-related kinase 3.</title>
        <authorList>
            <person name="Han S.H."/>
            <person name="Kim K.T."/>
        </authorList>
    </citation>
    <scope>FUNCTION</scope>
</reference>
<reference key="10">
    <citation type="journal article" date="2023" name="EMBO Rep.">
        <title>RNF144A promotes antiviral responses by modulating STING ubiquitination.</title>
        <authorList>
            <person name="Yang B."/>
            <person name="Pei J."/>
            <person name="Lu C."/>
            <person name="Wang Y."/>
            <person name="Shen M."/>
            <person name="Qin X."/>
            <person name="Huang Y."/>
            <person name="Yang X."/>
            <person name="Zhao X."/>
            <person name="Ma S."/>
            <person name="Song Z."/>
            <person name="Liang Y."/>
            <person name="Wang H."/>
            <person name="Wang J."/>
        </authorList>
    </citation>
    <scope>FUNCTION</scope>
    <scope>MUTAGENESIS OF CYS-20; CYS-23; CYS-198 AND GLY-252</scope>
    <scope>SUBCELLULAR LOCATION</scope>
</reference>
<reference key="11">
    <citation type="submission" date="2004-11" db="PDB data bank">
        <title>Solution structure of the RING finger domain of the human UbcM4-interacting protein 4.</title>
        <authorList>
            <consortium name="RIKEN structural genomics initiative (RSGI)"/>
        </authorList>
    </citation>
    <scope>STRUCTURE BY NMR OF 20-100</scope>
</reference>
<protein>
    <recommendedName>
        <fullName>E3 ubiquitin-protein ligase RNF144A</fullName>
        <ecNumber evidence="8">2.3.2.31</ecNumber>
    </recommendedName>
    <alternativeName>
        <fullName>RING finger protein 144A</fullName>
    </alternativeName>
    <alternativeName>
        <fullName>UbcM4-interacting protein 4</fullName>
    </alternativeName>
    <alternativeName>
        <fullName>Ubiquitin-conjugating enzyme 7-interacting protein 4</fullName>
    </alternativeName>
</protein>
<evidence type="ECO:0000250" key="1"/>
<evidence type="ECO:0000250" key="2">
    <source>
        <dbReference type="UniProtKB" id="O60260"/>
    </source>
</evidence>
<evidence type="ECO:0000255" key="3"/>
<evidence type="ECO:0000255" key="4">
    <source>
        <dbReference type="PROSITE-ProRule" id="PRU01221"/>
    </source>
</evidence>
<evidence type="ECO:0000269" key="5">
    <source>
    </source>
</evidence>
<evidence type="ECO:0000269" key="6">
    <source>
    </source>
</evidence>
<evidence type="ECO:0000269" key="7">
    <source>
    </source>
</evidence>
<evidence type="ECO:0000269" key="8">
    <source>
    </source>
</evidence>
<evidence type="ECO:0000269" key="9">
    <source>
    </source>
</evidence>
<evidence type="ECO:0000269" key="10">
    <source>
    </source>
</evidence>
<evidence type="ECO:0000269" key="11">
    <source>
    </source>
</evidence>
<evidence type="ECO:0000269" key="12">
    <source>
    </source>
</evidence>
<evidence type="ECO:0000269" key="13">
    <source ref="3"/>
</evidence>
<evidence type="ECO:0000305" key="14"/>
<evidence type="ECO:0007829" key="15">
    <source>
        <dbReference type="PDB" id="1WIM"/>
    </source>
</evidence>
<feature type="chain" id="PRO_0000056298" description="E3 ubiquitin-protein ligase RNF144A">
    <location>
        <begin position="1"/>
        <end position="292"/>
    </location>
</feature>
<feature type="transmembrane region" description="Helical" evidence="3">
    <location>
        <begin position="250"/>
        <end position="270"/>
    </location>
</feature>
<feature type="zinc finger region" description="RING-type 1" evidence="4">
    <location>
        <begin position="20"/>
        <end position="70"/>
    </location>
</feature>
<feature type="zinc finger region" description="IBR-type" evidence="4">
    <location>
        <begin position="91"/>
        <end position="156"/>
    </location>
</feature>
<feature type="zinc finger region" description="RING-type 2; atypical" evidence="4">
    <location>
        <begin position="185"/>
        <end position="214"/>
    </location>
</feature>
<feature type="region of interest" description="TRIAD supradomain" evidence="4">
    <location>
        <begin position="16"/>
        <end position="236"/>
    </location>
</feature>
<feature type="active site" evidence="4">
    <location>
        <position position="198"/>
    </location>
</feature>
<feature type="binding site" evidence="4">
    <location>
        <position position="20"/>
    </location>
    <ligand>
        <name>Zn(2+)</name>
        <dbReference type="ChEBI" id="CHEBI:29105"/>
        <label>1</label>
    </ligand>
</feature>
<feature type="binding site" evidence="4">
    <location>
        <position position="23"/>
    </location>
    <ligand>
        <name>Zn(2+)</name>
        <dbReference type="ChEBI" id="CHEBI:29105"/>
        <label>1</label>
    </ligand>
</feature>
<feature type="binding site" evidence="4">
    <location>
        <position position="43"/>
    </location>
    <ligand>
        <name>Zn(2+)</name>
        <dbReference type="ChEBI" id="CHEBI:29105"/>
        <label>1</label>
    </ligand>
</feature>
<feature type="binding site" evidence="4">
    <location>
        <position position="46"/>
    </location>
    <ligand>
        <name>Zn(2+)</name>
        <dbReference type="ChEBI" id="CHEBI:29105"/>
        <label>1</label>
    </ligand>
</feature>
<feature type="binding site" evidence="4">
    <location>
        <position position="111"/>
    </location>
    <ligand>
        <name>Zn(2+)</name>
        <dbReference type="ChEBI" id="CHEBI:29105"/>
        <label>2</label>
    </ligand>
</feature>
<feature type="binding site" evidence="4">
    <location>
        <position position="116"/>
    </location>
    <ligand>
        <name>Zn(2+)</name>
        <dbReference type="ChEBI" id="CHEBI:29105"/>
        <label>2</label>
    </ligand>
</feature>
<feature type="binding site" evidence="4">
    <location>
        <position position="135"/>
    </location>
    <ligand>
        <name>Zn(2+)</name>
        <dbReference type="ChEBI" id="CHEBI:29105"/>
        <label>2</label>
    </ligand>
</feature>
<feature type="binding site" evidence="4">
    <location>
        <position position="138"/>
    </location>
    <ligand>
        <name>Zn(2+)</name>
        <dbReference type="ChEBI" id="CHEBI:29105"/>
        <label>2</label>
    </ligand>
</feature>
<feature type="binding site" evidence="4">
    <location>
        <position position="143"/>
    </location>
    <ligand>
        <name>Zn(2+)</name>
        <dbReference type="ChEBI" id="CHEBI:29105"/>
        <label>3</label>
    </ligand>
</feature>
<feature type="binding site" evidence="4">
    <location>
        <position position="146"/>
    </location>
    <ligand>
        <name>Zn(2+)</name>
        <dbReference type="ChEBI" id="CHEBI:29105"/>
        <label>3</label>
    </ligand>
</feature>
<feature type="binding site" evidence="4">
    <location>
        <position position="151"/>
    </location>
    <ligand>
        <name>Zn(2+)</name>
        <dbReference type="ChEBI" id="CHEBI:29105"/>
        <label>3</label>
    </ligand>
</feature>
<feature type="binding site" evidence="4">
    <location>
        <position position="156"/>
    </location>
    <ligand>
        <name>Zn(2+)</name>
        <dbReference type="ChEBI" id="CHEBI:29105"/>
        <label>3</label>
    </ligand>
</feature>
<feature type="binding site" evidence="4">
    <location>
        <position position="185"/>
    </location>
    <ligand>
        <name>Zn(2+)</name>
        <dbReference type="ChEBI" id="CHEBI:29105"/>
        <label>4</label>
    </ligand>
</feature>
<feature type="binding site" evidence="4">
    <location>
        <position position="188"/>
    </location>
    <ligand>
        <name>Zn(2+)</name>
        <dbReference type="ChEBI" id="CHEBI:29105"/>
        <label>4</label>
    </ligand>
</feature>
<feature type="binding site" evidence="4">
    <location>
        <position position="203"/>
    </location>
    <ligand>
        <name>Zn(2+)</name>
        <dbReference type="ChEBI" id="CHEBI:29105"/>
        <label>4</label>
    </ligand>
</feature>
<feature type="binding site" evidence="4">
    <location>
        <position position="206"/>
    </location>
    <ligand>
        <name>Zn(2+)</name>
        <dbReference type="ChEBI" id="CHEBI:29105"/>
        <label>4</label>
    </ligand>
</feature>
<feature type="binding site" evidence="4">
    <location>
        <position position="211"/>
    </location>
    <ligand>
        <name>Zn(2+)</name>
        <dbReference type="ChEBI" id="CHEBI:29105"/>
        <label>5</label>
    </ligand>
</feature>
<feature type="binding site" evidence="4">
    <location>
        <position position="214"/>
    </location>
    <ligand>
        <name>Zn(2+)</name>
        <dbReference type="ChEBI" id="CHEBI:29105"/>
        <label>5</label>
    </ligand>
</feature>
<feature type="binding site" evidence="4">
    <location>
        <position position="226"/>
    </location>
    <ligand>
        <name>Zn(2+)</name>
        <dbReference type="ChEBI" id="CHEBI:29105"/>
        <label>5</label>
    </ligand>
</feature>
<feature type="binding site" evidence="4">
    <location>
        <position position="232"/>
    </location>
    <ligand>
        <name>Zn(2+)</name>
        <dbReference type="ChEBI" id="CHEBI:29105"/>
        <label>5</label>
    </ligand>
</feature>
<feature type="sequence variant" id="VAR_035375" description="In dbSNP:rs364891." evidence="6 12 13">
    <original>T</original>
    <variation>A</variation>
    <location>
        <position position="4"/>
    </location>
</feature>
<feature type="mutagenesis site" description="Complete loss of ubiquitin ligase activity and auto-ubiquitination; when associated with A-23." evidence="8 9 11">
    <original>C</original>
    <variation>A</variation>
    <location>
        <position position="20"/>
    </location>
</feature>
<feature type="mutagenesis site" description="Complete loss of ubiquitin ligase activity and auto-ubiquitination; when associated with A-20." evidence="8 9 11">
    <original>C</original>
    <variation>A</variation>
    <location>
        <position position="23"/>
    </location>
</feature>
<feature type="mutagenesis site" description="Preserves membrane localization but is defective ubiquitin ligase activity." evidence="11">
    <original>G</original>
    <variation>D</variation>
    <location>
        <position position="252"/>
    </location>
</feature>
<feature type="mutagenesis site" description="Preserves membrane localization but is defective in self-association and ubiquitin ligase activity; when associated with L-256." evidence="11">
    <original>G</original>
    <variation>L</variation>
    <location>
        <position position="252"/>
    </location>
</feature>
<feature type="mutagenesis site" description="Preserves membrane localization but is defective in self-association and ubiquitin ligase activity; when associated with L-252." evidence="11">
    <original>G</original>
    <variation>L</variation>
    <location>
        <position position="256"/>
    </location>
</feature>
<feature type="strand" evidence="15">
    <location>
        <begin position="21"/>
        <end position="23"/>
    </location>
</feature>
<feature type="helix" evidence="15">
    <location>
        <begin position="29"/>
        <end position="31"/>
    </location>
</feature>
<feature type="strand" evidence="15">
    <location>
        <begin position="32"/>
        <end position="35"/>
    </location>
</feature>
<feature type="turn" evidence="15">
    <location>
        <begin position="36"/>
        <end position="39"/>
    </location>
</feature>
<feature type="strand" evidence="15">
    <location>
        <begin position="40"/>
        <end position="43"/>
    </location>
</feature>
<feature type="helix" evidence="15">
    <location>
        <begin position="44"/>
        <end position="57"/>
    </location>
</feature>
<feature type="helix" evidence="15">
    <location>
        <begin position="78"/>
        <end position="84"/>
    </location>
</feature>
<feature type="helix" evidence="15">
    <location>
        <begin position="87"/>
        <end position="99"/>
    </location>
</feature>
<sequence length="292" mass="32890">MTTTRYRPTWDLALDPLVSCKLCLGEYPVEQMTTIAQCQCIFCTLCLKQYVELLIKEGLETAISCPDAACPKQGHLQENEIECMVAAEIMQRYKKLQFEREVLFDPCRTWCPASTCQAVCQLQDVGLQTPQPVQCKACRMEFCSTCKASWHPGQGCPETMPITFLPGETSAAFKMEEDDAPIKRCPKCKVYIERDEGCAQMMCKNCKHAFCWYCLESLDDDFLLIHYDKGPCRNKLGHSRASVIWHRTQVVGIFAGFGLLLLVASPFLLLATPFVLCCKCKCSKGDDDPLPT</sequence>